<protein>
    <recommendedName>
        <fullName evidence="6">Dermonecrotic toxin LhSicTox-alphaIA2aiii</fullName>
        <ecNumber evidence="4">4.6.1.-</ecNumber>
    </recommendedName>
    <alternativeName>
        <fullName>Phospholipase D</fullName>
        <shortName>PLD</shortName>
    </alternativeName>
    <alternativeName>
        <fullName>Sphingomyelin phosphodiesterase D</fullName>
        <shortName>SMD</shortName>
        <shortName>SMase D</shortName>
        <shortName>Sphingomyelinase D</shortName>
    </alternativeName>
</protein>
<sequence length="270" mass="29988">GHMVNAIYQIDEFANLGANSIETDVSFDDNANPEYTYHGIPCDCGRSCLKWENYNDFLKGLRSATTPGNSKYQSKLILVVFDLKTGSLYDNQASEAGKKLAKNLLKHYWNNGNNGGRAYIVLSIPDLNHYPLIKGFTDTLKQEGHPELLEKVGYDFSGNDAVGDVAKAYKKAGVSGHVWQSDGITNCLLRGLTRVKEAVANRDSGNGYINKVYYWTVDKRATTRDALDAGVDGVMTNYPDVIADVMNEAAYKNKVRLATYEDSPWVTFKK</sequence>
<accession>C0JAQ9</accession>
<organism>
    <name type="scientific">Loxosceles hirsuta</name>
    <name type="common">Recluse spider</name>
    <dbReference type="NCBI Taxonomy" id="571525"/>
    <lineage>
        <taxon>Eukaryota</taxon>
        <taxon>Metazoa</taxon>
        <taxon>Ecdysozoa</taxon>
        <taxon>Arthropoda</taxon>
        <taxon>Chelicerata</taxon>
        <taxon>Arachnida</taxon>
        <taxon>Araneae</taxon>
        <taxon>Araneomorphae</taxon>
        <taxon>Haplogynae</taxon>
        <taxon>Scytodoidea</taxon>
        <taxon>Sicariidae</taxon>
        <taxon>Loxosceles</taxon>
    </lineage>
</organism>
<name>A1IA3_LOXHI</name>
<proteinExistence type="evidence at transcript level"/>
<feature type="chain" id="PRO_0000392751" description="Dermonecrotic toxin LhSicTox-alphaIA2aiii">
    <location>
        <begin position="1" status="less than"/>
        <end position="270"/>
    </location>
</feature>
<feature type="active site" evidence="5">
    <location>
        <position position="2"/>
    </location>
</feature>
<feature type="active site" description="Nucleophile" evidence="5">
    <location>
        <position position="38"/>
    </location>
</feature>
<feature type="binding site" evidence="5">
    <location>
        <position position="22"/>
    </location>
    <ligand>
        <name>Mg(2+)</name>
        <dbReference type="ChEBI" id="CHEBI:18420"/>
    </ligand>
</feature>
<feature type="binding site" evidence="5">
    <location>
        <position position="24"/>
    </location>
    <ligand>
        <name>Mg(2+)</name>
        <dbReference type="ChEBI" id="CHEBI:18420"/>
    </ligand>
</feature>
<feature type="binding site" evidence="5">
    <location>
        <position position="82"/>
    </location>
    <ligand>
        <name>Mg(2+)</name>
        <dbReference type="ChEBI" id="CHEBI:18420"/>
    </ligand>
</feature>
<feature type="disulfide bond" evidence="3">
    <location>
        <begin position="42"/>
        <end position="48"/>
    </location>
</feature>
<feature type="disulfide bond" evidence="3">
    <location>
        <begin position="44"/>
        <end position="187"/>
    </location>
</feature>
<feature type="non-terminal residue">
    <location>
        <position position="1"/>
    </location>
</feature>
<reference key="1">
    <citation type="journal article" date="2009" name="Mol. Biol. Evol.">
        <title>Molecular evolution, functional variation, and proposed nomenclature of the gene family that includes sphingomyelinase D in sicariid spider venoms.</title>
        <authorList>
            <person name="Binford G.J."/>
            <person name="Bodner M.R."/>
            <person name="Cordes M.H."/>
            <person name="Baldwin K.L."/>
            <person name="Rynerson M.R."/>
            <person name="Burns S.N."/>
            <person name="Zobel-Thropp P.A."/>
        </authorList>
    </citation>
    <scope>NUCLEOTIDE SEQUENCE [MRNA]</scope>
    <scope>NOMENCLATURE</scope>
    <source>
        <tissue>Venom gland</tissue>
    </source>
</reference>
<comment type="function">
    <text evidence="1 3">Dermonecrotic toxins cleave the phosphodiester linkage between the phosphate and headgroup of certain phospholipids (sphingolipid and lysolipid substrates), forming an alcohol (often choline) and a cyclic phosphate (By similarity). This toxin acts on sphingomyelin (SM) (By similarity). It may also act on ceramide phosphoethanolamine (CPE), lysophosphatidylcholine (LPC) and lysophosphatidylethanolamine (LPE), but not on lysophosphatidylserine (LPS), and lysophosphatidylglycerol (LPG) (By similarity). It acts by transphosphatidylation, releasing exclusively cyclic phosphate products as second products (By similarity). Induces dermonecrosis, hemolysis, increased vascular permeability, edema, inflammatory response, and platelet aggregation (By similarity).</text>
</comment>
<comment type="catalytic activity">
    <reaction evidence="1">
        <text>an N-(acyl)-sphingosylphosphocholine = an N-(acyl)-sphingosyl-1,3-cyclic phosphate + choline</text>
        <dbReference type="Rhea" id="RHEA:60652"/>
        <dbReference type="ChEBI" id="CHEBI:15354"/>
        <dbReference type="ChEBI" id="CHEBI:64583"/>
        <dbReference type="ChEBI" id="CHEBI:143892"/>
    </reaction>
</comment>
<comment type="catalytic activity">
    <reaction evidence="1">
        <text>an N-(acyl)-sphingosylphosphoethanolamine = an N-(acyl)-sphingosyl-1,3-cyclic phosphate + ethanolamine</text>
        <dbReference type="Rhea" id="RHEA:60648"/>
        <dbReference type="ChEBI" id="CHEBI:57603"/>
        <dbReference type="ChEBI" id="CHEBI:143891"/>
        <dbReference type="ChEBI" id="CHEBI:143892"/>
    </reaction>
</comment>
<comment type="catalytic activity">
    <reaction evidence="1">
        <text>a 1-acyl-sn-glycero-3-phosphocholine = a 1-acyl-sn-glycero-2,3-cyclic phosphate + choline</text>
        <dbReference type="Rhea" id="RHEA:60700"/>
        <dbReference type="ChEBI" id="CHEBI:15354"/>
        <dbReference type="ChEBI" id="CHEBI:58168"/>
        <dbReference type="ChEBI" id="CHEBI:143947"/>
    </reaction>
</comment>
<comment type="catalytic activity">
    <reaction evidence="1">
        <text>a 1-acyl-sn-glycero-3-phosphoethanolamine = a 1-acyl-sn-glycero-2,3-cyclic phosphate + ethanolamine</text>
        <dbReference type="Rhea" id="RHEA:60704"/>
        <dbReference type="ChEBI" id="CHEBI:57603"/>
        <dbReference type="ChEBI" id="CHEBI:64381"/>
        <dbReference type="ChEBI" id="CHEBI:143947"/>
    </reaction>
</comment>
<comment type="cofactor">
    <cofactor evidence="5">
        <name>Mg(2+)</name>
        <dbReference type="ChEBI" id="CHEBI:18420"/>
    </cofactor>
    <text evidence="5">Binds 1 Mg(2+) ion per subunit.</text>
</comment>
<comment type="subcellular location">
    <subcellularLocation>
        <location evidence="8">Secreted</location>
    </subcellularLocation>
</comment>
<comment type="tissue specificity">
    <text evidence="8">Expressed by the venom gland.</text>
</comment>
<comment type="similarity">
    <text evidence="7">Belongs to the arthropod phospholipase D family. Class II subfamily.</text>
</comment>
<comment type="caution">
    <text evidence="1 2 4">The most common activity assay for dermonecrotic toxins detects enzymatic activity by monitoring choline release from substrate. Liberation of choline from sphingomyelin (SM) or lysophosphatidylcholine (LPC) is commonly assumed to result from substrate hydrolysis, giving either ceramide-1-phosphate (C1P) or lysophosphatidic acid (LPA), respectively, as a second product. However, two studies from Lajoie and colleagues (2013 and 2015) report the observation of exclusive formation of cyclic phosphate products as second products, resulting from intramolecular transphosphatidylation. Cyclic phosphates have vastly different biological properties from their monoester counterparts, and they may be relevant to the pathology of brown spider envenomation.</text>
</comment>
<evidence type="ECO:0000250" key="1">
    <source>
        <dbReference type="UniProtKB" id="A0A0D4WTV1"/>
    </source>
</evidence>
<evidence type="ECO:0000250" key="2">
    <source>
        <dbReference type="UniProtKB" id="A0A0D4WV12"/>
    </source>
</evidence>
<evidence type="ECO:0000250" key="3">
    <source>
        <dbReference type="UniProtKB" id="P0CE80"/>
    </source>
</evidence>
<evidence type="ECO:0000250" key="4">
    <source>
        <dbReference type="UniProtKB" id="Q4ZFU2"/>
    </source>
</evidence>
<evidence type="ECO:0000250" key="5">
    <source>
        <dbReference type="UniProtKB" id="Q8I914"/>
    </source>
</evidence>
<evidence type="ECO:0000303" key="6">
    <source>
    </source>
</evidence>
<evidence type="ECO:0000305" key="7"/>
<evidence type="ECO:0000305" key="8">
    <source>
    </source>
</evidence>
<dbReference type="EC" id="4.6.1.-" evidence="4"/>
<dbReference type="EMBL" id="FJ171344">
    <property type="protein sequence ID" value="ACN48840.1"/>
    <property type="molecule type" value="mRNA"/>
</dbReference>
<dbReference type="SMR" id="C0JAQ9"/>
<dbReference type="GO" id="GO:0005576">
    <property type="term" value="C:extracellular region"/>
    <property type="evidence" value="ECO:0007669"/>
    <property type="project" value="UniProtKB-SubCell"/>
</dbReference>
<dbReference type="GO" id="GO:0016829">
    <property type="term" value="F:lyase activity"/>
    <property type="evidence" value="ECO:0007669"/>
    <property type="project" value="UniProtKB-KW"/>
</dbReference>
<dbReference type="GO" id="GO:0046872">
    <property type="term" value="F:metal ion binding"/>
    <property type="evidence" value="ECO:0007669"/>
    <property type="project" value="UniProtKB-KW"/>
</dbReference>
<dbReference type="GO" id="GO:0008081">
    <property type="term" value="F:phosphoric diester hydrolase activity"/>
    <property type="evidence" value="ECO:0007669"/>
    <property type="project" value="InterPro"/>
</dbReference>
<dbReference type="GO" id="GO:0090729">
    <property type="term" value="F:toxin activity"/>
    <property type="evidence" value="ECO:0007669"/>
    <property type="project" value="UniProtKB-KW"/>
</dbReference>
<dbReference type="GO" id="GO:0031640">
    <property type="term" value="P:killing of cells of another organism"/>
    <property type="evidence" value="ECO:0007669"/>
    <property type="project" value="UniProtKB-KW"/>
</dbReference>
<dbReference type="GO" id="GO:0016042">
    <property type="term" value="P:lipid catabolic process"/>
    <property type="evidence" value="ECO:0007669"/>
    <property type="project" value="UniProtKB-KW"/>
</dbReference>
<dbReference type="CDD" id="cd08576">
    <property type="entry name" value="GDPD_like_SMaseD_PLD"/>
    <property type="match status" value="1"/>
</dbReference>
<dbReference type="Gene3D" id="3.20.20.190">
    <property type="entry name" value="Phosphatidylinositol (PI) phosphodiesterase"/>
    <property type="match status" value="1"/>
</dbReference>
<dbReference type="InterPro" id="IPR017946">
    <property type="entry name" value="PLC-like_Pdiesterase_TIM-brl"/>
</dbReference>
<dbReference type="Pfam" id="PF13653">
    <property type="entry name" value="GDPD_2"/>
    <property type="match status" value="1"/>
</dbReference>
<dbReference type="SUPFAM" id="SSF51695">
    <property type="entry name" value="PLC-like phosphodiesterases"/>
    <property type="match status" value="1"/>
</dbReference>
<keyword id="KW-0204">Cytolysis</keyword>
<keyword id="KW-1061">Dermonecrotic toxin</keyword>
<keyword id="KW-1015">Disulfide bond</keyword>
<keyword id="KW-0354">Hemolysis</keyword>
<keyword id="KW-0442">Lipid degradation</keyword>
<keyword id="KW-0443">Lipid metabolism</keyword>
<keyword id="KW-0456">Lyase</keyword>
<keyword id="KW-0460">Magnesium</keyword>
<keyword id="KW-0479">Metal-binding</keyword>
<keyword id="KW-0964">Secreted</keyword>
<keyword id="KW-0800">Toxin</keyword>